<gene>
    <name type="primary">HA</name>
</gene>
<sequence>DRICTGITSSNSPHVVKTATQGEVNVTGVIPLTTTPTKSHFANLKGTKTRGKLCPKCLNCTDLDVALGRPKCMGTIPSAKASILHEVKPVTSGCFPIMHDRTKXRQLPNLLRGYENIRLSTHNVINAETAPGGPYKIGTSGSCPNITNGNGFFATMAWAVPKNDNNKTATNPLTVEVPYICTEGEDQITVWGFHSDNETQMVKLYGDSKPQKFTSSANGVTAHYVSQIGGFPNQAEDGGLPQSGRIVVDYMVQKSGKTGTITYQRGILLPQKVWCASGRSKVIKGSLPLIGEADCLHEKYGGLNKSKPYYTGEHAKAIGNCPIWVKTPLKLANGTKYRPPAKLLKER</sequence>
<dbReference type="EMBL" id="L19643">
    <property type="protein sequence ID" value="AAA50371.1"/>
    <property type="molecule type" value="Genomic_RNA"/>
</dbReference>
<dbReference type="GlyCosmos" id="P68755">
    <property type="glycosylation" value="6 sites, No reported glycans"/>
</dbReference>
<dbReference type="GO" id="GO:0020002">
    <property type="term" value="C:host cell plasma membrane"/>
    <property type="evidence" value="ECO:0007669"/>
    <property type="project" value="UniProtKB-SubCell"/>
</dbReference>
<dbReference type="GO" id="GO:0016020">
    <property type="term" value="C:membrane"/>
    <property type="evidence" value="ECO:0007669"/>
    <property type="project" value="UniProtKB-KW"/>
</dbReference>
<dbReference type="GO" id="GO:0019031">
    <property type="term" value="C:viral envelope"/>
    <property type="evidence" value="ECO:0007669"/>
    <property type="project" value="UniProtKB-KW"/>
</dbReference>
<dbReference type="GO" id="GO:0055036">
    <property type="term" value="C:virion membrane"/>
    <property type="evidence" value="ECO:0007669"/>
    <property type="project" value="UniProtKB-SubCell"/>
</dbReference>
<dbReference type="GO" id="GO:0046789">
    <property type="term" value="F:host cell surface receptor binding"/>
    <property type="evidence" value="ECO:0007669"/>
    <property type="project" value="InterPro"/>
</dbReference>
<dbReference type="GO" id="GO:0039654">
    <property type="term" value="P:fusion of virus membrane with host endosome membrane"/>
    <property type="evidence" value="ECO:0007669"/>
    <property type="project" value="UniProtKB-KW"/>
</dbReference>
<dbReference type="GO" id="GO:0019064">
    <property type="term" value="P:fusion of virus membrane with host plasma membrane"/>
    <property type="evidence" value="ECO:0007669"/>
    <property type="project" value="InterPro"/>
</dbReference>
<dbReference type="GO" id="GO:0046718">
    <property type="term" value="P:symbiont entry into host cell"/>
    <property type="evidence" value="ECO:0007669"/>
    <property type="project" value="UniProtKB-KW"/>
</dbReference>
<dbReference type="GO" id="GO:0019062">
    <property type="term" value="P:virion attachment to host cell"/>
    <property type="evidence" value="ECO:0007669"/>
    <property type="project" value="UniProtKB-KW"/>
</dbReference>
<dbReference type="Gene3D" id="3.90.209.20">
    <property type="match status" value="1"/>
</dbReference>
<dbReference type="Gene3D" id="2.10.77.10">
    <property type="entry name" value="Hemagglutinin Chain A, Domain 2"/>
    <property type="match status" value="1"/>
</dbReference>
<dbReference type="InterPro" id="IPR008980">
    <property type="entry name" value="Capsid_hemagglutn"/>
</dbReference>
<dbReference type="InterPro" id="IPR013828">
    <property type="entry name" value="Hemagglutn_HA1_a/b_dom_sf"/>
</dbReference>
<dbReference type="InterPro" id="IPR001364">
    <property type="entry name" value="Hemagglutn_influenz_A/B"/>
</dbReference>
<dbReference type="Pfam" id="PF00509">
    <property type="entry name" value="Hemagglutinin"/>
    <property type="match status" value="1"/>
</dbReference>
<dbReference type="SUPFAM" id="SSF49818">
    <property type="entry name" value="Viral protein domain"/>
    <property type="match status" value="1"/>
</dbReference>
<organismHost>
    <name type="scientific">Homo sapiens</name>
    <name type="common">Human</name>
    <dbReference type="NCBI Taxonomy" id="9606"/>
</organismHost>
<comment type="function">
    <text>Binds to sialic acid-containing receptors on the cell surface, bringing about the attachment of the virus particle to the cell. Plays a major role in the determination of host range restriction and virulence. Class I viral fusion protein. Responsible for penetration of the virus into the cell cytoplasm by mediating the fusion of the membrane of the endocytosed virus particle with the endosomal membrane. Low pH in endosomes induce an irreversible conformational change in HA2, releasing the fusion hydrophobic peptide. Several trimers are required to form a competent fusion pore.</text>
</comment>
<comment type="subunit">
    <text>Homotrimer of disulfide-linked HA1-HA2.</text>
</comment>
<comment type="subcellular location">
    <subcellularLocation>
        <location evidence="3">Virion membrane</location>
        <topology evidence="3">Single-pass type I membrane protein</topology>
    </subcellularLocation>
    <subcellularLocation>
        <location>Host apical cell membrane</location>
        <topology>Single-pass type I membrane protein</topology>
    </subcellularLocation>
    <text>Targeted to the apical plasma membrane in epithelial polarized cells through a signal present in the transmembrane domain. Associated with glycosphingolipid- and cholesterol-enriched detergent-resistant lipid rafts.</text>
</comment>
<comment type="PTM">
    <text evidence="1">In natural infection, inactive HA is matured into HA1 and HA2 outside the cell by one or more trypsin-like, arginine-specific endoprotease secreted by the bronchial epithelial cells. One identified protease that may be involved in this process is secreted in lungs by club cells (By similarity).</text>
</comment>
<comment type="PTM">
    <text evidence="1">Palmitoylated.</text>
</comment>
<comment type="miscellaneous">
    <text>Major glycoprotein, comprises over 80% of the envelope proteins present in virus particle.</text>
</comment>
<comment type="miscellaneous">
    <text>The extent of infection into host organism is determined by HA. Influenza viruses bud from the apical surface of polarized epithelial cells (e.g. bronchial epithelial cells) into lumen of lungs and are therefore usually pneumotropic. The reason is that HA is cleaved by tryptase clara which is restricted to lungs. However, HAs of H5 and H7 pantropic avian viruses subtypes can be cleaved by furin and subtilisin-type enzymes, allowing the virus to grow in other organs than lungs.</text>
</comment>
<comment type="miscellaneous">
    <text>The influenza B genome consist of 8 RNA segments. Genetic variation of hemagglutinin and/or neuraminidase genes results in the emergence of new influenza strains. The mechanism of variation can be the result of point mutations or the result of genetic reassortment between segments of two different strains.</text>
</comment>
<comment type="similarity">
    <text evidence="3">Belongs to the influenza viruses hemagglutinin family.</text>
</comment>
<proteinExistence type="inferred from homology"/>
<accession>P68755</accession>
<accession>Q07922</accession>
<feature type="chain" id="PRO_0000039095" description="Hemagglutinin HA1 chain">
    <location>
        <begin position="1"/>
        <end position="346"/>
    </location>
</feature>
<feature type="glycosylation site" description="N-linked (GlcNAc...) asparagine; by host" evidence="2">
    <location>
        <position position="25"/>
    </location>
</feature>
<feature type="glycosylation site" description="N-linked (GlcNAc...) asparagine; by host" evidence="2">
    <location>
        <position position="59"/>
    </location>
</feature>
<feature type="glycosylation site" description="N-linked (GlcNAc...) asparagine; by host" evidence="2">
    <location>
        <position position="145"/>
    </location>
</feature>
<feature type="glycosylation site" description="N-linked (GlcNAc...) asparagine; by host" evidence="2">
    <location>
        <position position="166"/>
    </location>
</feature>
<feature type="glycosylation site" description="N-linked (GlcNAc...) asparagine; by host" evidence="2">
    <location>
        <position position="304"/>
    </location>
</feature>
<feature type="glycosylation site" description="N-linked (GlcNAc...) asparagine; by host" evidence="2">
    <location>
        <position position="333"/>
    </location>
</feature>
<feature type="non-terminal residue">
    <location>
        <position position="1"/>
    </location>
</feature>
<feature type="non-terminal residue">
    <location>
        <position position="347"/>
    </location>
</feature>
<protein>
    <recommendedName>
        <fullName>Hemagglutinin</fullName>
    </recommendedName>
    <component>
        <recommendedName>
            <fullName>Hemagglutinin HA1 chain</fullName>
        </recommendedName>
    </component>
</protein>
<keyword id="KW-1015">Disulfide bond</keyword>
<keyword id="KW-1170">Fusion of virus membrane with host endosomal membrane</keyword>
<keyword id="KW-1168">Fusion of virus membrane with host membrane</keyword>
<keyword id="KW-0325">Glycoprotein</keyword>
<keyword id="KW-0348">Hemagglutinin</keyword>
<keyword id="KW-1032">Host cell membrane</keyword>
<keyword id="KW-1043">Host membrane</keyword>
<keyword id="KW-0945">Host-virus interaction</keyword>
<keyword id="KW-0449">Lipoprotein</keyword>
<keyword id="KW-0472">Membrane</keyword>
<keyword id="KW-0564">Palmitate</keyword>
<keyword id="KW-0812">Transmembrane</keyword>
<keyword id="KW-1161">Viral attachment to host cell</keyword>
<keyword id="KW-0261">Viral envelope protein</keyword>
<keyword id="KW-1162">Viral penetration into host cytoplasm</keyword>
<keyword id="KW-0946">Virion</keyword>
<keyword id="KW-1160">Virus entry into host cell</keyword>
<evidence type="ECO:0000250" key="1"/>
<evidence type="ECO:0000255" key="2"/>
<evidence type="ECO:0000305" key="3"/>
<reference key="1">
    <citation type="journal article" date="1992" name="J. Gen. Virol.">
        <title>Evolution of influenza B/Victoria/2/87-like viruses: occurrence of a genetically conserved virus under conditions of low epidemic activity.</title>
        <authorList>
            <person name="Kinnunen L."/>
            <person name="Ikonen N."/>
            <person name="Poeyry T."/>
            <person name="Pyhaelae R."/>
        </authorList>
    </citation>
    <scope>NUCLEOTIDE SEQUENCE [GENOMIC RNA]</scope>
</reference>
<organism>
    <name type="scientific">Influenza B virus (strain B/Finland/145/1990)</name>
    <dbReference type="NCBI Taxonomy" id="38988"/>
    <lineage>
        <taxon>Viruses</taxon>
        <taxon>Riboviria</taxon>
        <taxon>Orthornavirae</taxon>
        <taxon>Negarnaviricota</taxon>
        <taxon>Polyploviricotina</taxon>
        <taxon>Insthoviricetes</taxon>
        <taxon>Articulavirales</taxon>
        <taxon>Orthomyxoviridae</taxon>
        <taxon>Betainfluenzavirus</taxon>
        <taxon>Betainfluenzavirus influenzae</taxon>
        <taxon>Influenza B virus</taxon>
    </lineage>
</organism>
<name>HEMA_INBF3</name>